<keyword id="KW-0963">Cytoplasm</keyword>
<keyword id="KW-0227">DNA damage</keyword>
<keyword id="KW-0233">DNA recombination</keyword>
<keyword id="KW-0234">DNA repair</keyword>
<keyword id="KW-0238">DNA-binding</keyword>
<feature type="chain" id="PRO_1000195176" description="Holliday junction branch migration complex subunit RuvA">
    <location>
        <begin position="1"/>
        <end position="205"/>
    </location>
</feature>
<feature type="region of interest" description="Domain I" evidence="1">
    <location>
        <begin position="1"/>
        <end position="64"/>
    </location>
</feature>
<feature type="region of interest" description="Domain II" evidence="1">
    <location>
        <begin position="65"/>
        <end position="143"/>
    </location>
</feature>
<feature type="region of interest" description="Flexible linker" evidence="1">
    <location>
        <begin position="144"/>
        <end position="156"/>
    </location>
</feature>
<feature type="region of interest" description="Domain III" evidence="1">
    <location>
        <begin position="157"/>
        <end position="205"/>
    </location>
</feature>
<gene>
    <name evidence="1" type="primary">ruvA</name>
    <name type="ordered locus">Sbal223_2043</name>
</gene>
<protein>
    <recommendedName>
        <fullName evidence="1">Holliday junction branch migration complex subunit RuvA</fullName>
    </recommendedName>
</protein>
<sequence length="205" mass="22483">MIGRLRGVLVEKQAPEILIDVNGVGYELQMPLTSFYELPEVNHETMVYTHFVVREDAQLLYGFITKQERALFRLLIKTNGVGPKLALTILSGMTAGEFVGCVERDDIVTLVKLPGVGKKTAERLLVEMRDKLKSLMEASAGSEREFVLQSNYSPAPTVNSAEEDAISALISLGYKPPQASKSVSAAYKEGMDSETLIKAALKSML</sequence>
<reference key="1">
    <citation type="submission" date="2008-12" db="EMBL/GenBank/DDBJ databases">
        <title>Complete sequence of chromosome of Shewanella baltica OS223.</title>
        <authorList>
            <consortium name="US DOE Joint Genome Institute"/>
            <person name="Lucas S."/>
            <person name="Copeland A."/>
            <person name="Lapidus A."/>
            <person name="Glavina del Rio T."/>
            <person name="Dalin E."/>
            <person name="Tice H."/>
            <person name="Bruce D."/>
            <person name="Goodwin L."/>
            <person name="Pitluck S."/>
            <person name="Chertkov O."/>
            <person name="Meincke L."/>
            <person name="Brettin T."/>
            <person name="Detter J.C."/>
            <person name="Han C."/>
            <person name="Kuske C.R."/>
            <person name="Larimer F."/>
            <person name="Land M."/>
            <person name="Hauser L."/>
            <person name="Kyrpides N."/>
            <person name="Ovchinnikova G."/>
            <person name="Brettar I."/>
            <person name="Rodrigues J."/>
            <person name="Konstantinidis K."/>
            <person name="Tiedje J."/>
        </authorList>
    </citation>
    <scope>NUCLEOTIDE SEQUENCE [LARGE SCALE GENOMIC DNA]</scope>
    <source>
        <strain>OS223</strain>
    </source>
</reference>
<name>RUVA_SHEB2</name>
<evidence type="ECO:0000255" key="1">
    <source>
        <dbReference type="HAMAP-Rule" id="MF_00031"/>
    </source>
</evidence>
<accession>B8EA74</accession>
<proteinExistence type="inferred from homology"/>
<comment type="function">
    <text evidence="1">The RuvA-RuvB-RuvC complex processes Holliday junction (HJ) DNA during genetic recombination and DNA repair, while the RuvA-RuvB complex plays an important role in the rescue of blocked DNA replication forks via replication fork reversal (RFR). RuvA specifically binds to HJ cruciform DNA, conferring on it an open structure. The RuvB hexamer acts as an ATP-dependent pump, pulling dsDNA into and through the RuvAB complex. HJ branch migration allows RuvC to scan DNA until it finds its consensus sequence, where it cleaves and resolves the cruciform DNA.</text>
</comment>
<comment type="subunit">
    <text evidence="1">Homotetramer. Forms an RuvA(8)-RuvB(12)-Holliday junction (HJ) complex. HJ DNA is sandwiched between 2 RuvA tetramers; dsDNA enters through RuvA and exits via RuvB. An RuvB hexamer assembles on each DNA strand where it exits the tetramer. Each RuvB hexamer is contacted by two RuvA subunits (via domain III) on 2 adjacent RuvB subunits; this complex drives branch migration. In the full resolvosome a probable DNA-RuvA(4)-RuvB(12)-RuvC(2) complex forms which resolves the HJ.</text>
</comment>
<comment type="subcellular location">
    <subcellularLocation>
        <location evidence="1">Cytoplasm</location>
    </subcellularLocation>
</comment>
<comment type="domain">
    <text evidence="1">Has three domains with a flexible linker between the domains II and III and assumes an 'L' shape. Domain III is highly mobile and contacts RuvB.</text>
</comment>
<comment type="similarity">
    <text evidence="1">Belongs to the RuvA family.</text>
</comment>
<organism>
    <name type="scientific">Shewanella baltica (strain OS223)</name>
    <dbReference type="NCBI Taxonomy" id="407976"/>
    <lineage>
        <taxon>Bacteria</taxon>
        <taxon>Pseudomonadati</taxon>
        <taxon>Pseudomonadota</taxon>
        <taxon>Gammaproteobacteria</taxon>
        <taxon>Alteromonadales</taxon>
        <taxon>Shewanellaceae</taxon>
        <taxon>Shewanella</taxon>
    </lineage>
</organism>
<dbReference type="EMBL" id="CP001252">
    <property type="protein sequence ID" value="ACK46547.1"/>
    <property type="molecule type" value="Genomic_DNA"/>
</dbReference>
<dbReference type="RefSeq" id="WP_006081742.1">
    <property type="nucleotide sequence ID" value="NC_011663.1"/>
</dbReference>
<dbReference type="SMR" id="B8EA74"/>
<dbReference type="GeneID" id="11772537"/>
<dbReference type="KEGG" id="sbp:Sbal223_2043"/>
<dbReference type="HOGENOM" id="CLU_087936_0_0_6"/>
<dbReference type="Proteomes" id="UP000002507">
    <property type="component" value="Chromosome"/>
</dbReference>
<dbReference type="GO" id="GO:0005737">
    <property type="term" value="C:cytoplasm"/>
    <property type="evidence" value="ECO:0007669"/>
    <property type="project" value="UniProtKB-SubCell"/>
</dbReference>
<dbReference type="GO" id="GO:0009379">
    <property type="term" value="C:Holliday junction helicase complex"/>
    <property type="evidence" value="ECO:0007669"/>
    <property type="project" value="InterPro"/>
</dbReference>
<dbReference type="GO" id="GO:0048476">
    <property type="term" value="C:Holliday junction resolvase complex"/>
    <property type="evidence" value="ECO:0007669"/>
    <property type="project" value="UniProtKB-UniRule"/>
</dbReference>
<dbReference type="GO" id="GO:0005524">
    <property type="term" value="F:ATP binding"/>
    <property type="evidence" value="ECO:0007669"/>
    <property type="project" value="InterPro"/>
</dbReference>
<dbReference type="GO" id="GO:0000400">
    <property type="term" value="F:four-way junction DNA binding"/>
    <property type="evidence" value="ECO:0007669"/>
    <property type="project" value="UniProtKB-UniRule"/>
</dbReference>
<dbReference type="GO" id="GO:0009378">
    <property type="term" value="F:four-way junction helicase activity"/>
    <property type="evidence" value="ECO:0007669"/>
    <property type="project" value="InterPro"/>
</dbReference>
<dbReference type="GO" id="GO:0006310">
    <property type="term" value="P:DNA recombination"/>
    <property type="evidence" value="ECO:0007669"/>
    <property type="project" value="UniProtKB-UniRule"/>
</dbReference>
<dbReference type="GO" id="GO:0006281">
    <property type="term" value="P:DNA repair"/>
    <property type="evidence" value="ECO:0007669"/>
    <property type="project" value="UniProtKB-UniRule"/>
</dbReference>
<dbReference type="CDD" id="cd14332">
    <property type="entry name" value="UBA_RuvA_C"/>
    <property type="match status" value="1"/>
</dbReference>
<dbReference type="Gene3D" id="1.10.150.20">
    <property type="entry name" value="5' to 3' exonuclease, C-terminal subdomain"/>
    <property type="match status" value="1"/>
</dbReference>
<dbReference type="Gene3D" id="1.10.8.10">
    <property type="entry name" value="DNA helicase RuvA subunit, C-terminal domain"/>
    <property type="match status" value="1"/>
</dbReference>
<dbReference type="Gene3D" id="2.40.50.140">
    <property type="entry name" value="Nucleic acid-binding proteins"/>
    <property type="match status" value="1"/>
</dbReference>
<dbReference type="HAMAP" id="MF_00031">
    <property type="entry name" value="DNA_HJ_migration_RuvA"/>
    <property type="match status" value="1"/>
</dbReference>
<dbReference type="InterPro" id="IPR013849">
    <property type="entry name" value="DNA_helicase_Holl-junc_RuvA_I"/>
</dbReference>
<dbReference type="InterPro" id="IPR003583">
    <property type="entry name" value="Hlx-hairpin-Hlx_DNA-bd_motif"/>
</dbReference>
<dbReference type="InterPro" id="IPR012340">
    <property type="entry name" value="NA-bd_OB-fold"/>
</dbReference>
<dbReference type="InterPro" id="IPR000085">
    <property type="entry name" value="RuvA"/>
</dbReference>
<dbReference type="InterPro" id="IPR010994">
    <property type="entry name" value="RuvA_2-like"/>
</dbReference>
<dbReference type="InterPro" id="IPR011114">
    <property type="entry name" value="RuvA_C"/>
</dbReference>
<dbReference type="InterPro" id="IPR036267">
    <property type="entry name" value="RuvA_C_sf"/>
</dbReference>
<dbReference type="NCBIfam" id="TIGR00084">
    <property type="entry name" value="ruvA"/>
    <property type="match status" value="1"/>
</dbReference>
<dbReference type="Pfam" id="PF14520">
    <property type="entry name" value="HHH_5"/>
    <property type="match status" value="1"/>
</dbReference>
<dbReference type="Pfam" id="PF07499">
    <property type="entry name" value="RuvA_C"/>
    <property type="match status" value="1"/>
</dbReference>
<dbReference type="Pfam" id="PF01330">
    <property type="entry name" value="RuvA_N"/>
    <property type="match status" value="1"/>
</dbReference>
<dbReference type="SMART" id="SM00278">
    <property type="entry name" value="HhH1"/>
    <property type="match status" value="2"/>
</dbReference>
<dbReference type="SUPFAM" id="SSF46929">
    <property type="entry name" value="DNA helicase RuvA subunit, C-terminal domain"/>
    <property type="match status" value="1"/>
</dbReference>
<dbReference type="SUPFAM" id="SSF50249">
    <property type="entry name" value="Nucleic acid-binding proteins"/>
    <property type="match status" value="1"/>
</dbReference>
<dbReference type="SUPFAM" id="SSF47781">
    <property type="entry name" value="RuvA domain 2-like"/>
    <property type="match status" value="1"/>
</dbReference>